<organism>
    <name type="scientific">Sinorhizobium medicae (strain WSM419)</name>
    <name type="common">Ensifer medicae</name>
    <dbReference type="NCBI Taxonomy" id="366394"/>
    <lineage>
        <taxon>Bacteria</taxon>
        <taxon>Pseudomonadati</taxon>
        <taxon>Pseudomonadota</taxon>
        <taxon>Alphaproteobacteria</taxon>
        <taxon>Hyphomicrobiales</taxon>
        <taxon>Rhizobiaceae</taxon>
        <taxon>Sinorhizobium/Ensifer group</taxon>
        <taxon>Sinorhizobium</taxon>
    </lineage>
</organism>
<feature type="chain" id="PRO_1000031207" description="Ribonuclease HII">
    <location>
        <begin position="1"/>
        <end position="216"/>
    </location>
</feature>
<feature type="domain" description="RNase H type-2" evidence="2">
    <location>
        <begin position="33"/>
        <end position="216"/>
    </location>
</feature>
<feature type="binding site" evidence="1">
    <location>
        <position position="39"/>
    </location>
    <ligand>
        <name>a divalent metal cation</name>
        <dbReference type="ChEBI" id="CHEBI:60240"/>
    </ligand>
</feature>
<feature type="binding site" evidence="1">
    <location>
        <position position="40"/>
    </location>
    <ligand>
        <name>a divalent metal cation</name>
        <dbReference type="ChEBI" id="CHEBI:60240"/>
    </ligand>
</feature>
<feature type="binding site" evidence="1">
    <location>
        <position position="130"/>
    </location>
    <ligand>
        <name>a divalent metal cation</name>
        <dbReference type="ChEBI" id="CHEBI:60240"/>
    </ligand>
</feature>
<gene>
    <name evidence="1" type="primary">rnhB</name>
    <name type="ordered locus">Smed_0451</name>
</gene>
<proteinExistence type="inferred from homology"/>
<sequence>MSRRKQPDSPLFPFQPPVPDFAFERAAQRDGLWPVAGADEAGRGPLAGPVVAAAVILNPDAIPTGLNDSKLLTAEQRETLFEEILATATVSIASSSSARIDTTDILKASLDAMRRAVHGLEVAARIVLVDGRDVPPGLSCHAKAIVKGDSRSVSIAAASIVAKVTRDRMMARADATFPLYGFAHHAGYATVKHRTAIESHGPCSLHRMSFRPFRQL</sequence>
<keyword id="KW-0963">Cytoplasm</keyword>
<keyword id="KW-0255">Endonuclease</keyword>
<keyword id="KW-0378">Hydrolase</keyword>
<keyword id="KW-0464">Manganese</keyword>
<keyword id="KW-0479">Metal-binding</keyword>
<keyword id="KW-0540">Nuclease</keyword>
<protein>
    <recommendedName>
        <fullName evidence="1">Ribonuclease HII</fullName>
        <shortName evidence="1">RNase HII</shortName>
        <ecNumber evidence="1">3.1.26.4</ecNumber>
    </recommendedName>
</protein>
<dbReference type="EC" id="3.1.26.4" evidence="1"/>
<dbReference type="EMBL" id="CP000738">
    <property type="protein sequence ID" value="ABR59308.1"/>
    <property type="molecule type" value="Genomic_DNA"/>
</dbReference>
<dbReference type="RefSeq" id="WP_011974654.1">
    <property type="nucleotide sequence ID" value="NC_009636.1"/>
</dbReference>
<dbReference type="RefSeq" id="YP_001326143.1">
    <property type="nucleotide sequence ID" value="NC_009636.1"/>
</dbReference>
<dbReference type="SMR" id="A6U6M8"/>
<dbReference type="STRING" id="366394.Smed_0451"/>
<dbReference type="KEGG" id="smd:Smed_0451"/>
<dbReference type="PATRIC" id="fig|366394.8.peg.3535"/>
<dbReference type="eggNOG" id="COG0164">
    <property type="taxonomic scope" value="Bacteria"/>
</dbReference>
<dbReference type="HOGENOM" id="CLU_036532_3_2_5"/>
<dbReference type="OrthoDB" id="9803420at2"/>
<dbReference type="Proteomes" id="UP000001108">
    <property type="component" value="Chromosome"/>
</dbReference>
<dbReference type="GO" id="GO:0005737">
    <property type="term" value="C:cytoplasm"/>
    <property type="evidence" value="ECO:0007669"/>
    <property type="project" value="UniProtKB-SubCell"/>
</dbReference>
<dbReference type="GO" id="GO:0032299">
    <property type="term" value="C:ribonuclease H2 complex"/>
    <property type="evidence" value="ECO:0007669"/>
    <property type="project" value="TreeGrafter"/>
</dbReference>
<dbReference type="GO" id="GO:0030145">
    <property type="term" value="F:manganese ion binding"/>
    <property type="evidence" value="ECO:0007669"/>
    <property type="project" value="UniProtKB-UniRule"/>
</dbReference>
<dbReference type="GO" id="GO:0003723">
    <property type="term" value="F:RNA binding"/>
    <property type="evidence" value="ECO:0007669"/>
    <property type="project" value="InterPro"/>
</dbReference>
<dbReference type="GO" id="GO:0004523">
    <property type="term" value="F:RNA-DNA hybrid ribonuclease activity"/>
    <property type="evidence" value="ECO:0007669"/>
    <property type="project" value="UniProtKB-UniRule"/>
</dbReference>
<dbReference type="GO" id="GO:0043137">
    <property type="term" value="P:DNA replication, removal of RNA primer"/>
    <property type="evidence" value="ECO:0007669"/>
    <property type="project" value="TreeGrafter"/>
</dbReference>
<dbReference type="GO" id="GO:0006298">
    <property type="term" value="P:mismatch repair"/>
    <property type="evidence" value="ECO:0007669"/>
    <property type="project" value="TreeGrafter"/>
</dbReference>
<dbReference type="CDD" id="cd07182">
    <property type="entry name" value="RNase_HII_bacteria_HII_like"/>
    <property type="match status" value="1"/>
</dbReference>
<dbReference type="Gene3D" id="3.30.420.10">
    <property type="entry name" value="Ribonuclease H-like superfamily/Ribonuclease H"/>
    <property type="match status" value="1"/>
</dbReference>
<dbReference type="HAMAP" id="MF_00052_B">
    <property type="entry name" value="RNase_HII_B"/>
    <property type="match status" value="1"/>
</dbReference>
<dbReference type="InterPro" id="IPR022898">
    <property type="entry name" value="RNase_HII"/>
</dbReference>
<dbReference type="InterPro" id="IPR001352">
    <property type="entry name" value="RNase_HII/HIII"/>
</dbReference>
<dbReference type="InterPro" id="IPR024567">
    <property type="entry name" value="RNase_HII/HIII_dom"/>
</dbReference>
<dbReference type="InterPro" id="IPR012337">
    <property type="entry name" value="RNaseH-like_sf"/>
</dbReference>
<dbReference type="InterPro" id="IPR036397">
    <property type="entry name" value="RNaseH_sf"/>
</dbReference>
<dbReference type="NCBIfam" id="NF000595">
    <property type="entry name" value="PRK00015.1-3"/>
    <property type="match status" value="1"/>
</dbReference>
<dbReference type="PANTHER" id="PTHR10954">
    <property type="entry name" value="RIBONUCLEASE H2 SUBUNIT A"/>
    <property type="match status" value="1"/>
</dbReference>
<dbReference type="PANTHER" id="PTHR10954:SF18">
    <property type="entry name" value="RIBONUCLEASE HII"/>
    <property type="match status" value="1"/>
</dbReference>
<dbReference type="Pfam" id="PF01351">
    <property type="entry name" value="RNase_HII"/>
    <property type="match status" value="1"/>
</dbReference>
<dbReference type="SUPFAM" id="SSF53098">
    <property type="entry name" value="Ribonuclease H-like"/>
    <property type="match status" value="1"/>
</dbReference>
<dbReference type="PROSITE" id="PS51975">
    <property type="entry name" value="RNASE_H_2"/>
    <property type="match status" value="1"/>
</dbReference>
<accession>A6U6M8</accession>
<reference key="1">
    <citation type="submission" date="2007-06" db="EMBL/GenBank/DDBJ databases">
        <title>Complete sequence of Sinorhizobium medicae WSM419 chromosome.</title>
        <authorList>
            <consortium name="US DOE Joint Genome Institute"/>
            <person name="Copeland A."/>
            <person name="Lucas S."/>
            <person name="Lapidus A."/>
            <person name="Barry K."/>
            <person name="Glavina del Rio T."/>
            <person name="Dalin E."/>
            <person name="Tice H."/>
            <person name="Pitluck S."/>
            <person name="Chain P."/>
            <person name="Malfatti S."/>
            <person name="Shin M."/>
            <person name="Vergez L."/>
            <person name="Schmutz J."/>
            <person name="Larimer F."/>
            <person name="Land M."/>
            <person name="Hauser L."/>
            <person name="Kyrpides N."/>
            <person name="Mikhailova N."/>
            <person name="Reeve W.G."/>
            <person name="Richardson P."/>
        </authorList>
    </citation>
    <scope>NUCLEOTIDE SEQUENCE [LARGE SCALE GENOMIC DNA]</scope>
    <source>
        <strain>WSM419</strain>
    </source>
</reference>
<comment type="function">
    <text evidence="1">Endonuclease that specifically degrades the RNA of RNA-DNA hybrids.</text>
</comment>
<comment type="catalytic activity">
    <reaction evidence="1">
        <text>Endonucleolytic cleavage to 5'-phosphomonoester.</text>
        <dbReference type="EC" id="3.1.26.4"/>
    </reaction>
</comment>
<comment type="cofactor">
    <cofactor evidence="1">
        <name>Mn(2+)</name>
        <dbReference type="ChEBI" id="CHEBI:29035"/>
    </cofactor>
    <cofactor evidence="1">
        <name>Mg(2+)</name>
        <dbReference type="ChEBI" id="CHEBI:18420"/>
    </cofactor>
    <text evidence="1">Manganese or magnesium. Binds 1 divalent metal ion per monomer in the absence of substrate. May bind a second metal ion after substrate binding.</text>
</comment>
<comment type="subcellular location">
    <subcellularLocation>
        <location evidence="1">Cytoplasm</location>
    </subcellularLocation>
</comment>
<comment type="similarity">
    <text evidence="1">Belongs to the RNase HII family.</text>
</comment>
<name>RNH2_SINMW</name>
<evidence type="ECO:0000255" key="1">
    <source>
        <dbReference type="HAMAP-Rule" id="MF_00052"/>
    </source>
</evidence>
<evidence type="ECO:0000255" key="2">
    <source>
        <dbReference type="PROSITE-ProRule" id="PRU01319"/>
    </source>
</evidence>